<organism>
    <name type="scientific">Cricetulus griseus</name>
    <name type="common">Chinese hamster</name>
    <name type="synonym">Cricetulus barabensis griseus</name>
    <dbReference type="NCBI Taxonomy" id="10029"/>
    <lineage>
        <taxon>Eukaryota</taxon>
        <taxon>Metazoa</taxon>
        <taxon>Chordata</taxon>
        <taxon>Craniata</taxon>
        <taxon>Vertebrata</taxon>
        <taxon>Euteleostomi</taxon>
        <taxon>Mammalia</taxon>
        <taxon>Eutheria</taxon>
        <taxon>Euarchontoglires</taxon>
        <taxon>Glires</taxon>
        <taxon>Rodentia</taxon>
        <taxon>Myomorpha</taxon>
        <taxon>Muroidea</taxon>
        <taxon>Cricetidae</taxon>
        <taxon>Cricetinae</taxon>
        <taxon>Cricetulus</taxon>
    </lineage>
</organism>
<dbReference type="EMBL" id="M33958">
    <property type="protein sequence ID" value="AAA37013.1"/>
    <property type="molecule type" value="Genomic_DNA"/>
</dbReference>
<dbReference type="PIR" id="A34759">
    <property type="entry name" value="A34759"/>
</dbReference>
<dbReference type="RefSeq" id="XP_003499061.1">
    <property type="nucleotide sequence ID" value="XM_003499013.3"/>
</dbReference>
<dbReference type="BMRB" id="Q60506"/>
<dbReference type="SMR" id="Q60506"/>
<dbReference type="GlyCosmos" id="Q60506">
    <property type="glycosylation" value="2 sites, No reported glycans"/>
</dbReference>
<dbReference type="PaxDb" id="10029-XP_007609107.1"/>
<dbReference type="Ensembl" id="ENSCGRT00001011263.1">
    <property type="protein sequence ID" value="ENSCGRP00001007243.1"/>
    <property type="gene ID" value="ENSCGRG00001009683.1"/>
</dbReference>
<dbReference type="GeneID" id="100762792"/>
<dbReference type="CTD" id="5621"/>
<dbReference type="eggNOG" id="ENOG502S2A8">
    <property type="taxonomic scope" value="Eukaryota"/>
</dbReference>
<dbReference type="GeneTree" id="ENSGT00510000049083"/>
<dbReference type="OMA" id="QMCTTQY"/>
<dbReference type="OrthoDB" id="9048788at2759"/>
<dbReference type="Proteomes" id="UP000694386">
    <property type="component" value="Unplaced"/>
</dbReference>
<dbReference type="Proteomes" id="UP001108280">
    <property type="component" value="Unplaced"/>
</dbReference>
<dbReference type="GO" id="GO:0009986">
    <property type="term" value="C:cell surface"/>
    <property type="evidence" value="ECO:0007669"/>
    <property type="project" value="Ensembl"/>
</dbReference>
<dbReference type="GO" id="GO:0005829">
    <property type="term" value="C:cytosol"/>
    <property type="evidence" value="ECO:0007669"/>
    <property type="project" value="Ensembl"/>
</dbReference>
<dbReference type="GO" id="GO:0030425">
    <property type="term" value="C:dendrite"/>
    <property type="evidence" value="ECO:0007669"/>
    <property type="project" value="Ensembl"/>
</dbReference>
<dbReference type="GO" id="GO:0005783">
    <property type="term" value="C:endoplasmic reticulum"/>
    <property type="evidence" value="ECO:0007669"/>
    <property type="project" value="Ensembl"/>
</dbReference>
<dbReference type="GO" id="GO:0005794">
    <property type="term" value="C:Golgi apparatus"/>
    <property type="evidence" value="ECO:0007669"/>
    <property type="project" value="UniProtKB-SubCell"/>
</dbReference>
<dbReference type="GO" id="GO:0016234">
    <property type="term" value="C:inclusion body"/>
    <property type="evidence" value="ECO:0007669"/>
    <property type="project" value="Ensembl"/>
</dbReference>
<dbReference type="GO" id="GO:0045121">
    <property type="term" value="C:membrane raft"/>
    <property type="evidence" value="ECO:0007669"/>
    <property type="project" value="Ensembl"/>
</dbReference>
<dbReference type="GO" id="GO:0031965">
    <property type="term" value="C:nuclear membrane"/>
    <property type="evidence" value="ECO:0007669"/>
    <property type="project" value="Ensembl"/>
</dbReference>
<dbReference type="GO" id="GO:0005886">
    <property type="term" value="C:plasma membrane"/>
    <property type="evidence" value="ECO:0007669"/>
    <property type="project" value="UniProtKB-SubCell"/>
</dbReference>
<dbReference type="GO" id="GO:0098552">
    <property type="term" value="C:side of membrane"/>
    <property type="evidence" value="ECO:0007669"/>
    <property type="project" value="UniProtKB-KW"/>
</dbReference>
<dbReference type="GO" id="GO:0043195">
    <property type="term" value="C:terminal bouton"/>
    <property type="evidence" value="ECO:0007669"/>
    <property type="project" value="Ensembl"/>
</dbReference>
<dbReference type="GO" id="GO:0001540">
    <property type="term" value="F:amyloid-beta binding"/>
    <property type="evidence" value="ECO:0007669"/>
    <property type="project" value="Ensembl"/>
</dbReference>
<dbReference type="GO" id="GO:0019828">
    <property type="term" value="F:aspartic-type endopeptidase inhibitor activity"/>
    <property type="evidence" value="ECO:0007669"/>
    <property type="project" value="Ensembl"/>
</dbReference>
<dbReference type="GO" id="GO:0005507">
    <property type="term" value="F:copper ion binding"/>
    <property type="evidence" value="ECO:0000250"/>
    <property type="project" value="UniProtKB"/>
</dbReference>
<dbReference type="GO" id="GO:1903135">
    <property type="term" value="F:cupric ion binding"/>
    <property type="evidence" value="ECO:0007669"/>
    <property type="project" value="Ensembl"/>
</dbReference>
<dbReference type="GO" id="GO:1903136">
    <property type="term" value="F:cuprous ion binding"/>
    <property type="evidence" value="ECO:0007669"/>
    <property type="project" value="Ensembl"/>
</dbReference>
<dbReference type="GO" id="GO:0005539">
    <property type="term" value="F:glycosaminoglycan binding"/>
    <property type="evidence" value="ECO:0007669"/>
    <property type="project" value="Ensembl"/>
</dbReference>
<dbReference type="GO" id="GO:0042802">
    <property type="term" value="F:identical protein binding"/>
    <property type="evidence" value="ECO:0007669"/>
    <property type="project" value="Ensembl"/>
</dbReference>
<dbReference type="GO" id="GO:0008017">
    <property type="term" value="F:microtubule binding"/>
    <property type="evidence" value="ECO:0007669"/>
    <property type="project" value="Ensembl"/>
</dbReference>
<dbReference type="GO" id="GO:0140693">
    <property type="term" value="F:molecular condensate scaffold activity"/>
    <property type="evidence" value="ECO:0007669"/>
    <property type="project" value="Ensembl"/>
</dbReference>
<dbReference type="GO" id="GO:0140677">
    <property type="term" value="F:molecular function activator activity"/>
    <property type="evidence" value="ECO:0007669"/>
    <property type="project" value="Ensembl"/>
</dbReference>
<dbReference type="GO" id="GO:0002020">
    <property type="term" value="F:protease binding"/>
    <property type="evidence" value="ECO:0007669"/>
    <property type="project" value="Ensembl"/>
</dbReference>
<dbReference type="GO" id="GO:0044877">
    <property type="term" value="F:protein-containing complex binding"/>
    <property type="evidence" value="ECO:0007669"/>
    <property type="project" value="Ensembl"/>
</dbReference>
<dbReference type="GO" id="GO:0038023">
    <property type="term" value="F:signaling receptor activity"/>
    <property type="evidence" value="ECO:0007669"/>
    <property type="project" value="Ensembl"/>
</dbReference>
<dbReference type="GO" id="GO:0031802">
    <property type="term" value="F:type 5 metabotropic glutamate receptor binding"/>
    <property type="evidence" value="ECO:0007669"/>
    <property type="project" value="Ensembl"/>
</dbReference>
<dbReference type="GO" id="GO:1904646">
    <property type="term" value="P:cellular response to amyloid-beta"/>
    <property type="evidence" value="ECO:0007669"/>
    <property type="project" value="Ensembl"/>
</dbReference>
<dbReference type="GO" id="GO:0071280">
    <property type="term" value="P:cellular response to copper ion"/>
    <property type="evidence" value="ECO:0007669"/>
    <property type="project" value="Ensembl"/>
</dbReference>
<dbReference type="GO" id="GO:0071466">
    <property type="term" value="P:cellular response to xenobiotic stimulus"/>
    <property type="evidence" value="ECO:0007669"/>
    <property type="project" value="Ensembl"/>
</dbReference>
<dbReference type="GO" id="GO:0035556">
    <property type="term" value="P:intracellular signal transduction"/>
    <property type="evidence" value="ECO:0007669"/>
    <property type="project" value="Ensembl"/>
</dbReference>
<dbReference type="GO" id="GO:0007611">
    <property type="term" value="P:learning or memory"/>
    <property type="evidence" value="ECO:0007669"/>
    <property type="project" value="Ensembl"/>
</dbReference>
<dbReference type="GO" id="GO:0046007">
    <property type="term" value="P:negative regulation of activated T cell proliferation"/>
    <property type="evidence" value="ECO:0007669"/>
    <property type="project" value="Ensembl"/>
</dbReference>
<dbReference type="GO" id="GO:1902430">
    <property type="term" value="P:negative regulation of amyloid-beta formation"/>
    <property type="evidence" value="ECO:0007669"/>
    <property type="project" value="Ensembl"/>
</dbReference>
<dbReference type="GO" id="GO:0043066">
    <property type="term" value="P:negative regulation of apoptotic process"/>
    <property type="evidence" value="ECO:0007669"/>
    <property type="project" value="Ensembl"/>
</dbReference>
<dbReference type="GO" id="GO:0070885">
    <property type="term" value="P:negative regulation of calcineurin-NFAT signaling cascade"/>
    <property type="evidence" value="ECO:0007669"/>
    <property type="project" value="Ensembl"/>
</dbReference>
<dbReference type="GO" id="GO:1902951">
    <property type="term" value="P:negative regulation of dendritic spine maintenance"/>
    <property type="evidence" value="ECO:0007669"/>
    <property type="project" value="Ensembl"/>
</dbReference>
<dbReference type="GO" id="GO:0032700">
    <property type="term" value="P:negative regulation of interleukin-17 production"/>
    <property type="evidence" value="ECO:0007669"/>
    <property type="project" value="Ensembl"/>
</dbReference>
<dbReference type="GO" id="GO:0032703">
    <property type="term" value="P:negative regulation of interleukin-2 production"/>
    <property type="evidence" value="ECO:0007669"/>
    <property type="project" value="Ensembl"/>
</dbReference>
<dbReference type="GO" id="GO:0050860">
    <property type="term" value="P:negative regulation of T cell receptor signaling pathway"/>
    <property type="evidence" value="ECO:0007669"/>
    <property type="project" value="Ensembl"/>
</dbReference>
<dbReference type="GO" id="GO:0000122">
    <property type="term" value="P:negative regulation of transcription by RNA polymerase II"/>
    <property type="evidence" value="ECO:0007669"/>
    <property type="project" value="Ensembl"/>
</dbReference>
<dbReference type="GO" id="GO:0032689">
    <property type="term" value="P:negative regulation of type II interferon production"/>
    <property type="evidence" value="ECO:0007669"/>
    <property type="project" value="Ensembl"/>
</dbReference>
<dbReference type="GO" id="GO:1990535">
    <property type="term" value="P:neuron projection maintenance"/>
    <property type="evidence" value="ECO:0007669"/>
    <property type="project" value="Ensembl"/>
</dbReference>
<dbReference type="GO" id="GO:0050850">
    <property type="term" value="P:positive regulation of calcium-mediated signaling"/>
    <property type="evidence" value="ECO:0007669"/>
    <property type="project" value="Ensembl"/>
</dbReference>
<dbReference type="GO" id="GO:1900451">
    <property type="term" value="P:positive regulation of glutamate receptor signaling pathway"/>
    <property type="evidence" value="ECO:0007669"/>
    <property type="project" value="Ensembl"/>
</dbReference>
<dbReference type="GO" id="GO:0043525">
    <property type="term" value="P:positive regulation of neuron apoptotic process"/>
    <property type="evidence" value="ECO:0007669"/>
    <property type="project" value="Ensembl"/>
</dbReference>
<dbReference type="GO" id="GO:1903078">
    <property type="term" value="P:positive regulation of protein localization to plasma membrane"/>
    <property type="evidence" value="ECO:0007669"/>
    <property type="project" value="Ensembl"/>
</dbReference>
<dbReference type="GO" id="GO:0090314">
    <property type="term" value="P:positive regulation of protein targeting to membrane"/>
    <property type="evidence" value="ECO:0007669"/>
    <property type="project" value="Ensembl"/>
</dbReference>
<dbReference type="GO" id="GO:0031648">
    <property type="term" value="P:protein destabilization"/>
    <property type="evidence" value="ECO:0007669"/>
    <property type="project" value="Ensembl"/>
</dbReference>
<dbReference type="GO" id="GO:0051260">
    <property type="term" value="P:protein homooligomerization"/>
    <property type="evidence" value="ECO:0007669"/>
    <property type="project" value="InterPro"/>
</dbReference>
<dbReference type="GO" id="GO:1905664">
    <property type="term" value="P:regulation of calcium ion import across plasma membrane"/>
    <property type="evidence" value="ECO:0007669"/>
    <property type="project" value="Ensembl"/>
</dbReference>
<dbReference type="GO" id="GO:1901379">
    <property type="term" value="P:regulation of potassium ion transmembrane transport"/>
    <property type="evidence" value="ECO:0007669"/>
    <property type="project" value="Ensembl"/>
</dbReference>
<dbReference type="GO" id="GO:0006979">
    <property type="term" value="P:response to oxidative stress"/>
    <property type="evidence" value="ECO:0007669"/>
    <property type="project" value="Ensembl"/>
</dbReference>
<dbReference type="FunFam" id="1.10.790.10:FF:000001">
    <property type="entry name" value="Major prion protein"/>
    <property type="match status" value="1"/>
</dbReference>
<dbReference type="Gene3D" id="1.10.790.10">
    <property type="entry name" value="Prion/Doppel protein, beta-ribbon domain"/>
    <property type="match status" value="1"/>
</dbReference>
<dbReference type="InterPro" id="IPR000817">
    <property type="entry name" value="Prion"/>
</dbReference>
<dbReference type="InterPro" id="IPR036924">
    <property type="entry name" value="Prion/Doppel_b-ribbon_dom_sf"/>
</dbReference>
<dbReference type="InterPro" id="IPR022416">
    <property type="entry name" value="Prion/Doppel_prot_b-ribbon_dom"/>
</dbReference>
<dbReference type="InterPro" id="IPR020949">
    <property type="entry name" value="Prion_copper_b_octapeptide"/>
</dbReference>
<dbReference type="InterPro" id="IPR025860">
    <property type="entry name" value="Prion_N"/>
</dbReference>
<dbReference type="PANTHER" id="PTHR15506">
    <property type="entry name" value="DOPPEL PRION"/>
    <property type="match status" value="1"/>
</dbReference>
<dbReference type="PANTHER" id="PTHR15506:SF2">
    <property type="entry name" value="MAJOR PRION PROTEIN"/>
    <property type="match status" value="1"/>
</dbReference>
<dbReference type="Pfam" id="PF00377">
    <property type="entry name" value="Prion"/>
    <property type="match status" value="1"/>
</dbReference>
<dbReference type="Pfam" id="PF11587">
    <property type="entry name" value="Prion_bPrPp"/>
    <property type="match status" value="1"/>
</dbReference>
<dbReference type="Pfam" id="PF03991">
    <property type="entry name" value="Prion_octapep"/>
    <property type="match status" value="1"/>
</dbReference>
<dbReference type="PRINTS" id="PR00341">
    <property type="entry name" value="PRION"/>
</dbReference>
<dbReference type="SMART" id="SM00157">
    <property type="entry name" value="PRP"/>
    <property type="match status" value="1"/>
</dbReference>
<dbReference type="SUPFAM" id="SSF54098">
    <property type="entry name" value="Prion-like"/>
    <property type="match status" value="1"/>
</dbReference>
<dbReference type="PROSITE" id="PS00291">
    <property type="entry name" value="PRION_1"/>
    <property type="match status" value="1"/>
</dbReference>
<dbReference type="PROSITE" id="PS00706">
    <property type="entry name" value="PRION_2"/>
    <property type="match status" value="1"/>
</dbReference>
<name>PRIO_CRIGR</name>
<protein>
    <recommendedName>
        <fullName>Major prion protein</fullName>
        <shortName>PrP</shortName>
    </recommendedName>
    <alternativeName>
        <fullName>PrP27-30</fullName>
    </alternativeName>
    <alternativeName>
        <fullName>PrP33-35C</fullName>
    </alternativeName>
    <cdAntigenName>CD230</cdAntigenName>
</protein>
<evidence type="ECO:0000250" key="1"/>
<evidence type="ECO:0000250" key="2">
    <source>
        <dbReference type="UniProtKB" id="P04156"/>
    </source>
</evidence>
<evidence type="ECO:0000250" key="3">
    <source>
        <dbReference type="UniProtKB" id="P04273"/>
    </source>
</evidence>
<evidence type="ECO:0000250" key="4">
    <source>
        <dbReference type="UniProtKB" id="P04925"/>
    </source>
</evidence>
<evidence type="ECO:0000255" key="5"/>
<evidence type="ECO:0000256" key="6">
    <source>
        <dbReference type="SAM" id="MobiDB-lite"/>
    </source>
</evidence>
<evidence type="ECO:0000305" key="7"/>
<gene>
    <name type="primary">PRNP</name>
    <name type="synonym">PRP</name>
</gene>
<proteinExistence type="inferred from homology"/>
<keyword id="KW-0034">Amyloid</keyword>
<keyword id="KW-1003">Cell membrane</keyword>
<keyword id="KW-0186">Copper</keyword>
<keyword id="KW-1015">Disulfide bond</keyword>
<keyword id="KW-0325">Glycoprotein</keyword>
<keyword id="KW-0333">Golgi apparatus</keyword>
<keyword id="KW-0336">GPI-anchor</keyword>
<keyword id="KW-0449">Lipoprotein</keyword>
<keyword id="KW-0472">Membrane</keyword>
<keyword id="KW-0479">Metal-binding</keyword>
<keyword id="KW-0640">Prion</keyword>
<keyword id="KW-0677">Repeat</keyword>
<keyword id="KW-0732">Signal</keyword>
<keyword id="KW-0862">Zinc</keyword>
<feature type="signal peptide" evidence="1">
    <location>
        <begin position="1"/>
        <end position="22"/>
    </location>
</feature>
<feature type="chain" id="PRO_0000025665" description="Major prion protein">
    <location>
        <begin position="23"/>
        <end position="231"/>
    </location>
</feature>
<feature type="propeptide" id="PRO_0000025666" description="Removed in mature form" evidence="5">
    <location>
        <begin position="232"/>
        <end position="254"/>
    </location>
</feature>
<feature type="repeat" description="1">
    <location>
        <begin position="51"/>
        <end position="59"/>
    </location>
</feature>
<feature type="repeat" description="2">
    <location>
        <begin position="60"/>
        <end position="67"/>
    </location>
</feature>
<feature type="repeat" description="3">
    <location>
        <begin position="68"/>
        <end position="75"/>
    </location>
</feature>
<feature type="repeat" description="4">
    <location>
        <begin position="76"/>
        <end position="83"/>
    </location>
</feature>
<feature type="repeat" description="5">
    <location>
        <begin position="84"/>
        <end position="91"/>
    </location>
</feature>
<feature type="region of interest" description="Interaction with GRB2, ERI3 and SYN1" evidence="4">
    <location>
        <begin position="23"/>
        <end position="231"/>
    </location>
</feature>
<feature type="region of interest" description="Disordered" evidence="6">
    <location>
        <begin position="25"/>
        <end position="104"/>
    </location>
</feature>
<feature type="region of interest" description="5 X 8 AA tandem repeats of P-H-G-G-G-W-G-Q">
    <location>
        <begin position="51"/>
        <end position="91"/>
    </location>
</feature>
<feature type="region of interest" description="PrP27-30 (protease resistant core)">
    <location>
        <begin position="90"/>
        <end position="231"/>
    </location>
</feature>
<feature type="compositionally biased region" description="Gly residues" evidence="6">
    <location>
        <begin position="52"/>
        <end position="95"/>
    </location>
</feature>
<feature type="binding site" evidence="2">
    <location>
        <position position="61"/>
    </location>
    <ligand>
        <name>Cu(2+)</name>
        <dbReference type="ChEBI" id="CHEBI:29036"/>
        <label>1</label>
    </ligand>
</feature>
<feature type="binding site" evidence="2">
    <location>
        <position position="62"/>
    </location>
    <ligand>
        <name>Cu(2+)</name>
        <dbReference type="ChEBI" id="CHEBI:29036"/>
        <label>1</label>
    </ligand>
</feature>
<feature type="binding site" evidence="2">
    <location>
        <position position="63"/>
    </location>
    <ligand>
        <name>Cu(2+)</name>
        <dbReference type="ChEBI" id="CHEBI:29036"/>
        <label>1</label>
    </ligand>
</feature>
<feature type="binding site" evidence="2">
    <location>
        <position position="69"/>
    </location>
    <ligand>
        <name>Cu(2+)</name>
        <dbReference type="ChEBI" id="CHEBI:29036"/>
        <label>2</label>
    </ligand>
</feature>
<feature type="binding site" evidence="2">
    <location>
        <position position="70"/>
    </location>
    <ligand>
        <name>Cu(2+)</name>
        <dbReference type="ChEBI" id="CHEBI:29036"/>
        <label>2</label>
    </ligand>
</feature>
<feature type="binding site" evidence="2">
    <location>
        <position position="71"/>
    </location>
    <ligand>
        <name>Cu(2+)</name>
        <dbReference type="ChEBI" id="CHEBI:29036"/>
        <label>2</label>
    </ligand>
</feature>
<feature type="binding site" evidence="2">
    <location>
        <position position="77"/>
    </location>
    <ligand>
        <name>Cu(2+)</name>
        <dbReference type="ChEBI" id="CHEBI:29036"/>
        <label>3</label>
    </ligand>
</feature>
<feature type="binding site" evidence="2">
    <location>
        <position position="78"/>
    </location>
    <ligand>
        <name>Cu(2+)</name>
        <dbReference type="ChEBI" id="CHEBI:29036"/>
        <label>3</label>
    </ligand>
</feature>
<feature type="binding site" evidence="2">
    <location>
        <position position="79"/>
    </location>
    <ligand>
        <name>Cu(2+)</name>
        <dbReference type="ChEBI" id="CHEBI:29036"/>
        <label>3</label>
    </ligand>
</feature>
<feature type="binding site" evidence="2">
    <location>
        <position position="85"/>
    </location>
    <ligand>
        <name>Cu(2+)</name>
        <dbReference type="ChEBI" id="CHEBI:29036"/>
        <label>4</label>
    </ligand>
</feature>
<feature type="binding site" evidence="2">
    <location>
        <position position="86"/>
    </location>
    <ligand>
        <name>Cu(2+)</name>
        <dbReference type="ChEBI" id="CHEBI:29036"/>
        <label>4</label>
    </ligand>
</feature>
<feature type="binding site" evidence="2">
    <location>
        <position position="87"/>
    </location>
    <ligand>
        <name>Cu(2+)</name>
        <dbReference type="ChEBI" id="CHEBI:29036"/>
        <label>4</label>
    </ligand>
</feature>
<feature type="lipid moiety-binding region" description="GPI-anchor amidated serine" evidence="3">
    <location>
        <position position="231"/>
    </location>
</feature>
<feature type="glycosylation site" description="N-linked (GlcNAc...) asparagine" evidence="1">
    <location>
        <position position="181"/>
    </location>
</feature>
<feature type="glycosylation site" description="N-linked (GlcNAc...) asparagine" evidence="1">
    <location>
        <position position="197"/>
    </location>
</feature>
<feature type="disulfide bond" evidence="3">
    <location>
        <begin position="179"/>
        <end position="214"/>
    </location>
</feature>
<sequence>MANLSYWLLALFVATWTDVGLCKKRPKPGGWNTGGSRYPGQGSPGGNRYPPQGGGTWGQPHGGGWGQPHGGGWGQPHGGGWGQPHGGGWGQGGGTHNQWNKPSKPKTNMKHVAGAAAAGAVVGGLGGYMLGSAMSRPMLHFGNDWEDRYYRENMNRYPNQVYYRPVDQYNNQNNFVHDCVNITIKQHTVTTTTKGENFTETDVKMMERVVEQMCVTQYQKESQAYYDGRRSSAVLFSSPPVILLISFLIFLIVG</sequence>
<reference key="1">
    <citation type="journal article" date="1990" name="Mol. Cell. Biol.">
        <title>Three hamster species with different scrapie incubation times and neuropathological features encode distinct prion proteins.</title>
        <authorList>
            <person name="Lowenstein D.H."/>
            <person name="Butler D.A."/>
            <person name="Westaway D."/>
            <person name="McKinley M.P."/>
            <person name="DeArmond S.J."/>
            <person name="Prusiner S.B."/>
        </authorList>
    </citation>
    <scope>NUCLEOTIDE SEQUENCE [GENOMIC DNA]</scope>
    <source>
        <tissue>Brain</tissue>
    </source>
</reference>
<comment type="function">
    <text evidence="2 4">Its primary physiological function is unclear. Has cytoprotective activity against internal or environmental stresses. May play a role in neuronal development and synaptic plasticity. May be required for neuronal myelin sheath maintenance. May play a role in iron uptake and iron homeostasis. Soluble oligomers are toxic to cultured neuroblastoma cells and induce apoptosis (in vitro). Association with GPC1 (via its heparan sulfate chains) targets PRNP to lipid rafts. Also provides Cu(2+) or Zn(2+) for the ascorbate-mediated GPC1 deaminase degradation of its heparan sulfate side chains (By similarity).</text>
</comment>
<comment type="subunit">
    <text evidence="2 4">Monomer and homodimer. Has a tendency to aggregate into amyloid fibrils containing a cross-beta spine, formed by a steric zipper of superposed beta-strands. Soluble oligomers may represent an intermediate stage on the path to fibril formation. Copper binding may promote oligomerization. Interacts with GRB2, APP, ERI3/PRNPIP and SYN1. Mislocalized cytosolically exposed PrP interacts with MGRN1; this interaction alters MGRN1 subcellular location and causes lysosomal enlargement. Interacts with KIAA1191.</text>
</comment>
<comment type="subcellular location">
    <subcellularLocation>
        <location evidence="2">Cell membrane</location>
        <topology evidence="2">Lipid-anchor</topology>
        <topology evidence="2">GPI-anchor</topology>
    </subcellularLocation>
    <subcellularLocation>
        <location evidence="4">Golgi apparatus</location>
    </subcellularLocation>
    <text evidence="2">Targeted to lipid rafts via association with the heparan sulfate chains of GPC1. Colocates, in the presence of Cu(2+), to vesicles in para- and perinuclear regions, where both proteins undergo internalization. Heparin displaces PRNP from lipid rafts and promotes endocytosis.</text>
</comment>
<comment type="domain">
    <text evidence="2">The normal, monomeric form has a mainly alpha-helical structure. The disease-associated, protease-resistant form forms amyloid fibrils containing a cross-beta spine, formed by a steric zipper of superposed beta-strands. Disease mutations may favor intermolecular contacts via short beta strands, and may thereby trigger oligomerization.</text>
</comment>
<comment type="domain">
    <text evidence="2">Contains an N-terminal region composed of octamer repeats. At low copper concentrations, the sidechains of His residues from three or four repeats contribute to the binding of a single copper ion. Alternatively, a copper ion can be bound by interaction with the sidechain and backbone amide nitrogen of a single His residue. The observed copper binding stoichiometry suggests that two repeat regions cooperate to stabilize the binding of a single copper ion. At higher copper concentrations, each octamer can bind one copper ion by interactions with the His sidechain and Gly backbone atoms. A mixture of binding types may occur, especially in the case of octamer repeat expansion. Copper binding may stabilize the conformation of this region and may promote oligomerization.</text>
</comment>
<comment type="disease">
    <text evidence="7">PrP is found in high quantity in the brain of humans and animals infected with the degenerative neurological diseases kuru, Creutzfeldt-Jakob disease (CJD), Gerstmann-Straussler syndrome (GSS), scrapie, bovine spongiform encephalopathy (BSE), transmissible mink encephalopathy (TME), etc.</text>
</comment>
<comment type="similarity">
    <text evidence="7">Belongs to the prion family.</text>
</comment>
<accession>Q60506</accession>